<feature type="chain" id="PRO_1000049287" description="Small ribosomal subunit protein bS16">
    <location>
        <begin position="1"/>
        <end position="152"/>
    </location>
</feature>
<feature type="region of interest" description="Disordered" evidence="2">
    <location>
        <begin position="84"/>
        <end position="152"/>
    </location>
</feature>
<feature type="compositionally biased region" description="Basic and acidic residues" evidence="2">
    <location>
        <begin position="97"/>
        <end position="123"/>
    </location>
</feature>
<feature type="compositionally biased region" description="Low complexity" evidence="2">
    <location>
        <begin position="124"/>
        <end position="144"/>
    </location>
</feature>
<gene>
    <name evidence="1" type="primary">rpsP</name>
    <name type="ordered locus">Mmar10_2896</name>
</gene>
<comment type="similarity">
    <text evidence="1">Belongs to the bacterial ribosomal protein bS16 family.</text>
</comment>
<protein>
    <recommendedName>
        <fullName evidence="1">Small ribosomal subunit protein bS16</fullName>
    </recommendedName>
    <alternativeName>
        <fullName evidence="3">30S ribosomal protein S16</fullName>
    </alternativeName>
</protein>
<keyword id="KW-1185">Reference proteome</keyword>
<keyword id="KW-0687">Ribonucleoprotein</keyword>
<keyword id="KW-0689">Ribosomal protein</keyword>
<evidence type="ECO:0000255" key="1">
    <source>
        <dbReference type="HAMAP-Rule" id="MF_00385"/>
    </source>
</evidence>
<evidence type="ECO:0000256" key="2">
    <source>
        <dbReference type="SAM" id="MobiDB-lite"/>
    </source>
</evidence>
<evidence type="ECO:0000305" key="3"/>
<proteinExistence type="inferred from homology"/>
<dbReference type="EMBL" id="CP000449">
    <property type="protein sequence ID" value="ABI67177.1"/>
    <property type="molecule type" value="Genomic_DNA"/>
</dbReference>
<dbReference type="RefSeq" id="WP_011644821.1">
    <property type="nucleotide sequence ID" value="NC_008347.1"/>
</dbReference>
<dbReference type="SMR" id="Q0AKL6"/>
<dbReference type="STRING" id="394221.Mmar10_2896"/>
<dbReference type="KEGG" id="mmr:Mmar10_2896"/>
<dbReference type="eggNOG" id="COG0228">
    <property type="taxonomic scope" value="Bacteria"/>
</dbReference>
<dbReference type="HOGENOM" id="CLU_100590_3_1_5"/>
<dbReference type="OrthoDB" id="9807878at2"/>
<dbReference type="Proteomes" id="UP000001964">
    <property type="component" value="Chromosome"/>
</dbReference>
<dbReference type="GO" id="GO:0005737">
    <property type="term" value="C:cytoplasm"/>
    <property type="evidence" value="ECO:0007669"/>
    <property type="project" value="UniProtKB-ARBA"/>
</dbReference>
<dbReference type="GO" id="GO:0015935">
    <property type="term" value="C:small ribosomal subunit"/>
    <property type="evidence" value="ECO:0007669"/>
    <property type="project" value="TreeGrafter"/>
</dbReference>
<dbReference type="GO" id="GO:0003735">
    <property type="term" value="F:structural constituent of ribosome"/>
    <property type="evidence" value="ECO:0007669"/>
    <property type="project" value="InterPro"/>
</dbReference>
<dbReference type="GO" id="GO:0006412">
    <property type="term" value="P:translation"/>
    <property type="evidence" value="ECO:0007669"/>
    <property type="project" value="UniProtKB-UniRule"/>
</dbReference>
<dbReference type="Gene3D" id="3.30.1320.10">
    <property type="match status" value="1"/>
</dbReference>
<dbReference type="HAMAP" id="MF_00385">
    <property type="entry name" value="Ribosomal_bS16"/>
    <property type="match status" value="1"/>
</dbReference>
<dbReference type="InterPro" id="IPR000307">
    <property type="entry name" value="Ribosomal_bS16"/>
</dbReference>
<dbReference type="InterPro" id="IPR020592">
    <property type="entry name" value="Ribosomal_bS16_CS"/>
</dbReference>
<dbReference type="InterPro" id="IPR023803">
    <property type="entry name" value="Ribosomal_bS16_dom_sf"/>
</dbReference>
<dbReference type="NCBIfam" id="TIGR00002">
    <property type="entry name" value="S16"/>
    <property type="match status" value="1"/>
</dbReference>
<dbReference type="PANTHER" id="PTHR12919">
    <property type="entry name" value="30S RIBOSOMAL PROTEIN S16"/>
    <property type="match status" value="1"/>
</dbReference>
<dbReference type="PANTHER" id="PTHR12919:SF20">
    <property type="entry name" value="SMALL RIBOSOMAL SUBUNIT PROTEIN BS16M"/>
    <property type="match status" value="1"/>
</dbReference>
<dbReference type="Pfam" id="PF00886">
    <property type="entry name" value="Ribosomal_S16"/>
    <property type="match status" value="1"/>
</dbReference>
<dbReference type="SUPFAM" id="SSF54565">
    <property type="entry name" value="Ribosomal protein S16"/>
    <property type="match status" value="1"/>
</dbReference>
<dbReference type="PROSITE" id="PS00732">
    <property type="entry name" value="RIBOSOMAL_S16"/>
    <property type="match status" value="1"/>
</dbReference>
<sequence length="152" mass="16668">MSLKIRLARGGAKKRPYYRIVVADSRSPRDGRFIEKIGSYNPMLPKDGQRVELDMEKVKAWIAKGAKPTDRVGRFIHQIEADAWKWEASNNPQKAEPGQKAKELAAEKAEKEADRKAAEEEAKAAAAAPAAEEAPAEEAPAAEAAAEEEKSE</sequence>
<accession>Q0AKL6</accession>
<organism>
    <name type="scientific">Maricaulis maris (strain MCS10)</name>
    <name type="common">Caulobacter maris</name>
    <dbReference type="NCBI Taxonomy" id="394221"/>
    <lineage>
        <taxon>Bacteria</taxon>
        <taxon>Pseudomonadati</taxon>
        <taxon>Pseudomonadota</taxon>
        <taxon>Alphaproteobacteria</taxon>
        <taxon>Maricaulales</taxon>
        <taxon>Maricaulaceae</taxon>
        <taxon>Maricaulis</taxon>
    </lineage>
</organism>
<reference key="1">
    <citation type="submission" date="2006-08" db="EMBL/GenBank/DDBJ databases">
        <title>Complete sequence of Maricaulis maris MCS10.</title>
        <authorList>
            <consortium name="US DOE Joint Genome Institute"/>
            <person name="Copeland A."/>
            <person name="Lucas S."/>
            <person name="Lapidus A."/>
            <person name="Barry K."/>
            <person name="Detter J.C."/>
            <person name="Glavina del Rio T."/>
            <person name="Hammon N."/>
            <person name="Israni S."/>
            <person name="Dalin E."/>
            <person name="Tice H."/>
            <person name="Pitluck S."/>
            <person name="Saunders E."/>
            <person name="Brettin T."/>
            <person name="Bruce D."/>
            <person name="Han C."/>
            <person name="Tapia R."/>
            <person name="Gilna P."/>
            <person name="Schmutz J."/>
            <person name="Larimer F."/>
            <person name="Land M."/>
            <person name="Hauser L."/>
            <person name="Kyrpides N."/>
            <person name="Mikhailova N."/>
            <person name="Viollier P."/>
            <person name="Stephens C."/>
            <person name="Richardson P."/>
        </authorList>
    </citation>
    <scope>NUCLEOTIDE SEQUENCE [LARGE SCALE GENOMIC DNA]</scope>
    <source>
        <strain>MCS10</strain>
    </source>
</reference>
<name>RS16_MARMM</name>